<evidence type="ECO:0000255" key="1">
    <source>
        <dbReference type="HAMAP-Rule" id="MF_00488"/>
    </source>
</evidence>
<protein>
    <recommendedName>
        <fullName evidence="1">L-lactate dehydrogenase</fullName>
        <shortName evidence="1">L-LDH</shortName>
        <ecNumber evidence="1">1.1.1.27</ecNumber>
    </recommendedName>
</protein>
<dbReference type="EC" id="1.1.1.27" evidence="1"/>
<dbReference type="EMBL" id="CP000232">
    <property type="protein sequence ID" value="ABC20126.1"/>
    <property type="molecule type" value="Genomic_DNA"/>
</dbReference>
<dbReference type="RefSeq" id="YP_430669.1">
    <property type="nucleotide sequence ID" value="NC_007644.1"/>
</dbReference>
<dbReference type="SMR" id="Q2RHG3"/>
<dbReference type="STRING" id="264732.Moth_1826"/>
<dbReference type="EnsemblBacteria" id="ABC20126">
    <property type="protein sequence ID" value="ABC20126"/>
    <property type="gene ID" value="Moth_1826"/>
</dbReference>
<dbReference type="KEGG" id="mta:Moth_1826"/>
<dbReference type="PATRIC" id="fig|264732.11.peg.1977"/>
<dbReference type="eggNOG" id="COG0039">
    <property type="taxonomic scope" value="Bacteria"/>
</dbReference>
<dbReference type="HOGENOM" id="CLU_045401_1_1_9"/>
<dbReference type="OrthoDB" id="9802969at2"/>
<dbReference type="UniPathway" id="UPA00554">
    <property type="reaction ID" value="UER00611"/>
</dbReference>
<dbReference type="GO" id="GO:0005737">
    <property type="term" value="C:cytoplasm"/>
    <property type="evidence" value="ECO:0007669"/>
    <property type="project" value="UniProtKB-SubCell"/>
</dbReference>
<dbReference type="GO" id="GO:0004459">
    <property type="term" value="F:L-lactate dehydrogenase activity"/>
    <property type="evidence" value="ECO:0007669"/>
    <property type="project" value="UniProtKB-UniRule"/>
</dbReference>
<dbReference type="GO" id="GO:0006096">
    <property type="term" value="P:glycolytic process"/>
    <property type="evidence" value="ECO:0007669"/>
    <property type="project" value="UniProtKB-UniRule"/>
</dbReference>
<dbReference type="GO" id="GO:0006089">
    <property type="term" value="P:lactate metabolic process"/>
    <property type="evidence" value="ECO:0007669"/>
    <property type="project" value="TreeGrafter"/>
</dbReference>
<dbReference type="CDD" id="cd05292">
    <property type="entry name" value="LDH_2"/>
    <property type="match status" value="1"/>
</dbReference>
<dbReference type="FunFam" id="3.40.50.720:FF:000018">
    <property type="entry name" value="Malate dehydrogenase"/>
    <property type="match status" value="1"/>
</dbReference>
<dbReference type="Gene3D" id="3.90.110.10">
    <property type="entry name" value="Lactate dehydrogenase/glycoside hydrolase, family 4, C-terminal"/>
    <property type="match status" value="1"/>
</dbReference>
<dbReference type="Gene3D" id="3.40.50.720">
    <property type="entry name" value="NAD(P)-binding Rossmann-like Domain"/>
    <property type="match status" value="1"/>
</dbReference>
<dbReference type="HAMAP" id="MF_00488">
    <property type="entry name" value="Lactate_dehydrog"/>
    <property type="match status" value="1"/>
</dbReference>
<dbReference type="InterPro" id="IPR001557">
    <property type="entry name" value="L-lactate/malate_DH"/>
</dbReference>
<dbReference type="InterPro" id="IPR011304">
    <property type="entry name" value="L-lactate_DH"/>
</dbReference>
<dbReference type="InterPro" id="IPR018177">
    <property type="entry name" value="L-lactate_DH_AS"/>
</dbReference>
<dbReference type="InterPro" id="IPR022383">
    <property type="entry name" value="Lactate/malate_DH_C"/>
</dbReference>
<dbReference type="InterPro" id="IPR001236">
    <property type="entry name" value="Lactate/malate_DH_N"/>
</dbReference>
<dbReference type="InterPro" id="IPR015955">
    <property type="entry name" value="Lactate_DH/Glyco_Ohase_4_C"/>
</dbReference>
<dbReference type="InterPro" id="IPR036291">
    <property type="entry name" value="NAD(P)-bd_dom_sf"/>
</dbReference>
<dbReference type="NCBIfam" id="TIGR01771">
    <property type="entry name" value="L-LDH-NAD"/>
    <property type="match status" value="1"/>
</dbReference>
<dbReference type="NCBIfam" id="NF000824">
    <property type="entry name" value="PRK00066.1"/>
    <property type="match status" value="1"/>
</dbReference>
<dbReference type="PANTHER" id="PTHR43128">
    <property type="entry name" value="L-2-HYDROXYCARBOXYLATE DEHYDROGENASE (NAD(P)(+))"/>
    <property type="match status" value="1"/>
</dbReference>
<dbReference type="PANTHER" id="PTHR43128:SF16">
    <property type="entry name" value="L-LACTATE DEHYDROGENASE"/>
    <property type="match status" value="1"/>
</dbReference>
<dbReference type="Pfam" id="PF02866">
    <property type="entry name" value="Ldh_1_C"/>
    <property type="match status" value="1"/>
</dbReference>
<dbReference type="Pfam" id="PF00056">
    <property type="entry name" value="Ldh_1_N"/>
    <property type="match status" value="1"/>
</dbReference>
<dbReference type="PIRSF" id="PIRSF000102">
    <property type="entry name" value="Lac_mal_DH"/>
    <property type="match status" value="1"/>
</dbReference>
<dbReference type="PRINTS" id="PR00086">
    <property type="entry name" value="LLDHDRGNASE"/>
</dbReference>
<dbReference type="SUPFAM" id="SSF56327">
    <property type="entry name" value="LDH C-terminal domain-like"/>
    <property type="match status" value="1"/>
</dbReference>
<dbReference type="SUPFAM" id="SSF51735">
    <property type="entry name" value="NAD(P)-binding Rossmann-fold domains"/>
    <property type="match status" value="1"/>
</dbReference>
<dbReference type="PROSITE" id="PS00064">
    <property type="entry name" value="L_LDH"/>
    <property type="match status" value="1"/>
</dbReference>
<sequence length="317" mass="34556">MGLQGPAKVAIIGTGYVGSSTAFALLFSPLVKEMVLVDVNHAKAEGEAMDLAHAATLIRPVEVYAGRPADCAGSRIVIFTAGANQQPGQTRLDLIHRNTAIVRQALPEILHYCPEALVLMVANPVDILTYVAWKISGLPENRVLGSGTVLDSARFRHLLSRHYRVDPRNIHAYVIGEHGDTEVPVWSLANVAGVDLEEFYLMDGMREEEAFRVEISHQVREAAYEIIERKGVTSYGVALALSRIIECILRNEHSVLTISSVIRDLYGIDGEVALSLPCLVGNEGREKVLAIPLVAREKAALKHSATTLQQLIAQLSL</sequence>
<comment type="function">
    <text evidence="1">Catalyzes the conversion of lactate to pyruvate.</text>
</comment>
<comment type="catalytic activity">
    <reaction evidence="1">
        <text>(S)-lactate + NAD(+) = pyruvate + NADH + H(+)</text>
        <dbReference type="Rhea" id="RHEA:23444"/>
        <dbReference type="ChEBI" id="CHEBI:15361"/>
        <dbReference type="ChEBI" id="CHEBI:15378"/>
        <dbReference type="ChEBI" id="CHEBI:16651"/>
        <dbReference type="ChEBI" id="CHEBI:57540"/>
        <dbReference type="ChEBI" id="CHEBI:57945"/>
        <dbReference type="EC" id="1.1.1.27"/>
    </reaction>
</comment>
<comment type="activity regulation">
    <text evidence="1">Allosterically activated by fructose 1,6-bisphosphate (FBP).</text>
</comment>
<comment type="pathway">
    <text evidence="1">Fermentation; pyruvate fermentation to lactate; (S)-lactate from pyruvate: step 1/1.</text>
</comment>
<comment type="subunit">
    <text evidence="1">Homotetramer.</text>
</comment>
<comment type="subcellular location">
    <subcellularLocation>
        <location evidence="1">Cytoplasm</location>
    </subcellularLocation>
</comment>
<comment type="similarity">
    <text evidence="1">Belongs to the LDH/MDH superfamily. LDH family.</text>
</comment>
<reference key="1">
    <citation type="journal article" date="2008" name="Environ. Microbiol.">
        <title>The complete genome sequence of Moorella thermoacetica (f. Clostridium thermoaceticum).</title>
        <authorList>
            <person name="Pierce E."/>
            <person name="Xie G."/>
            <person name="Barabote R.D."/>
            <person name="Saunders E."/>
            <person name="Han C.S."/>
            <person name="Detter J.C."/>
            <person name="Richardson P."/>
            <person name="Brettin T.S."/>
            <person name="Das A."/>
            <person name="Ljungdahl L.G."/>
            <person name="Ragsdale S.W."/>
        </authorList>
    </citation>
    <scope>NUCLEOTIDE SEQUENCE [LARGE SCALE GENOMIC DNA]</scope>
    <source>
        <strain>ATCC 39073 / JCM 9320</strain>
    </source>
</reference>
<keyword id="KW-0021">Allosteric enzyme</keyword>
<keyword id="KW-0963">Cytoplasm</keyword>
<keyword id="KW-0520">NAD</keyword>
<keyword id="KW-0560">Oxidoreductase</keyword>
<keyword id="KW-0597">Phosphoprotein</keyword>
<name>LDH_MOOTA</name>
<feature type="chain" id="PRO_0000237551" description="L-lactate dehydrogenase">
    <location>
        <begin position="1"/>
        <end position="317"/>
    </location>
</feature>
<feature type="active site" description="Proton acceptor" evidence="1">
    <location>
        <position position="178"/>
    </location>
</feature>
<feature type="binding site" evidence="1">
    <location>
        <position position="17"/>
    </location>
    <ligand>
        <name>NAD(+)</name>
        <dbReference type="ChEBI" id="CHEBI:57540"/>
    </ligand>
</feature>
<feature type="binding site" evidence="1">
    <location>
        <position position="38"/>
    </location>
    <ligand>
        <name>NAD(+)</name>
        <dbReference type="ChEBI" id="CHEBI:57540"/>
    </ligand>
</feature>
<feature type="binding site" evidence="1">
    <location>
        <position position="43"/>
    </location>
    <ligand>
        <name>NAD(+)</name>
        <dbReference type="ChEBI" id="CHEBI:57540"/>
    </ligand>
</feature>
<feature type="binding site" evidence="1">
    <location>
        <begin position="82"/>
        <end position="83"/>
    </location>
    <ligand>
        <name>NAD(+)</name>
        <dbReference type="ChEBI" id="CHEBI:57540"/>
    </ligand>
</feature>
<feature type="binding site" evidence="1">
    <location>
        <position position="85"/>
    </location>
    <ligand>
        <name>substrate</name>
    </ligand>
</feature>
<feature type="binding site" evidence="1">
    <location>
        <position position="91"/>
    </location>
    <ligand>
        <name>substrate</name>
    </ligand>
</feature>
<feature type="binding site" evidence="1">
    <location>
        <begin position="121"/>
        <end position="123"/>
    </location>
    <ligand>
        <name>NAD(+)</name>
        <dbReference type="ChEBI" id="CHEBI:57540"/>
    </ligand>
</feature>
<feature type="binding site" evidence="1">
    <location>
        <begin position="123"/>
        <end position="126"/>
    </location>
    <ligand>
        <name>substrate</name>
    </ligand>
</feature>
<feature type="binding site" evidence="1">
    <location>
        <position position="146"/>
    </location>
    <ligand>
        <name>NAD(+)</name>
        <dbReference type="ChEBI" id="CHEBI:57540"/>
    </ligand>
</feature>
<feature type="binding site" evidence="1">
    <location>
        <begin position="151"/>
        <end position="154"/>
    </location>
    <ligand>
        <name>substrate</name>
    </ligand>
</feature>
<feature type="binding site" evidence="1">
    <location>
        <position position="156"/>
    </location>
    <ligand>
        <name>beta-D-fructose 1,6-bisphosphate</name>
        <dbReference type="ChEBI" id="CHEBI:32966"/>
        <note>allosteric activator</note>
    </ligand>
</feature>
<feature type="binding site" evidence="1">
    <location>
        <position position="171"/>
    </location>
    <ligand>
        <name>beta-D-fructose 1,6-bisphosphate</name>
        <dbReference type="ChEBI" id="CHEBI:32966"/>
        <note>allosteric activator</note>
    </ligand>
</feature>
<feature type="binding site" evidence="1">
    <location>
        <position position="233"/>
    </location>
    <ligand>
        <name>substrate</name>
    </ligand>
</feature>
<feature type="modified residue" description="Phosphotyrosine" evidence="1">
    <location>
        <position position="224"/>
    </location>
</feature>
<organism>
    <name type="scientific">Moorella thermoacetica (strain ATCC 39073 / JCM 9320)</name>
    <dbReference type="NCBI Taxonomy" id="264732"/>
    <lineage>
        <taxon>Bacteria</taxon>
        <taxon>Bacillati</taxon>
        <taxon>Bacillota</taxon>
        <taxon>Clostridia</taxon>
        <taxon>Moorellales</taxon>
        <taxon>Moorellaceae</taxon>
        <taxon>Moorella</taxon>
    </lineage>
</organism>
<gene>
    <name evidence="1" type="primary">ldh</name>
    <name type="ordered locus">Moth_1826</name>
</gene>
<proteinExistence type="inferred from homology"/>
<accession>Q2RHG3</accession>